<keyword id="KW-1185">Reference proteome</keyword>
<dbReference type="EMBL" id="U28377">
    <property type="protein sequence ID" value="AAA69082.1"/>
    <property type="molecule type" value="Genomic_DNA"/>
</dbReference>
<dbReference type="EMBL" id="U00096">
    <property type="status" value="NOT_ANNOTATED_CDS"/>
    <property type="molecule type" value="Genomic_DNA"/>
</dbReference>
<dbReference type="EMBL" id="AP009048">
    <property type="protein sequence ID" value="BAE76979.1"/>
    <property type="molecule type" value="Genomic_DNA"/>
</dbReference>
<dbReference type="PIR" id="B65076">
    <property type="entry name" value="B65076"/>
</dbReference>
<dbReference type="RefSeq" id="WP_000545308.1">
    <property type="nucleotide sequence ID" value="NZ_SSUR01000013.1"/>
</dbReference>
<dbReference type="SMR" id="P64562"/>
<dbReference type="BioGRID" id="4259615">
    <property type="interactions" value="12"/>
</dbReference>
<dbReference type="FunCoup" id="P64562">
    <property type="interactions" value="381"/>
</dbReference>
<dbReference type="IntAct" id="P64562">
    <property type="interactions" value="1"/>
</dbReference>
<dbReference type="KEGG" id="ecj:JW2882"/>
<dbReference type="KEGG" id="ecoc:C3026_15975"/>
<dbReference type="PATRIC" id="fig|83333.103.peg.3811"/>
<dbReference type="EchoBASE" id="EB2955"/>
<dbReference type="HOGENOM" id="CLU_186699_0_0_6"/>
<dbReference type="InParanoid" id="P64562"/>
<dbReference type="OMA" id="LPLYAPW"/>
<dbReference type="OrthoDB" id="5671700at2"/>
<dbReference type="Proteomes" id="UP000000625">
    <property type="component" value="Chromosome"/>
</dbReference>
<dbReference type="Gene3D" id="3.40.190.290">
    <property type="match status" value="1"/>
</dbReference>
<dbReference type="InterPro" id="IPR005119">
    <property type="entry name" value="LysR_subst-bd"/>
</dbReference>
<dbReference type="Pfam" id="PF03466">
    <property type="entry name" value="LysR_substrate"/>
    <property type="match status" value="1"/>
</dbReference>
<dbReference type="SUPFAM" id="SSF53850">
    <property type="entry name" value="Periplasmic binding protein-like II"/>
    <property type="match status" value="1"/>
</dbReference>
<gene>
    <name type="primary">yqfE</name>
    <name type="ordered locus">b2915</name>
    <name type="ordered locus">JW2882</name>
</gene>
<comment type="caution">
    <text evidence="1">Could be the product of a pseudogene, it is missing up to 240 N-terminal residues compared to orthologs.</text>
</comment>
<reference key="1">
    <citation type="journal article" date="1997" name="Science">
        <title>The complete genome sequence of Escherichia coli K-12.</title>
        <authorList>
            <person name="Blattner F.R."/>
            <person name="Plunkett G. III"/>
            <person name="Bloch C.A."/>
            <person name="Perna N.T."/>
            <person name="Burland V."/>
            <person name="Riley M."/>
            <person name="Collado-Vides J."/>
            <person name="Glasner J.D."/>
            <person name="Rode C.K."/>
            <person name="Mayhew G.F."/>
            <person name="Gregor J."/>
            <person name="Davis N.W."/>
            <person name="Kirkpatrick H.A."/>
            <person name="Goeden M.A."/>
            <person name="Rose D.J."/>
            <person name="Mau B."/>
            <person name="Shao Y."/>
        </authorList>
    </citation>
    <scope>NUCLEOTIDE SEQUENCE [LARGE SCALE GENOMIC DNA]</scope>
    <source>
        <strain>K12 / MG1655 / ATCC 47076</strain>
    </source>
</reference>
<reference key="2">
    <citation type="journal article" date="2006" name="Mol. Syst. Biol.">
        <title>Highly accurate genome sequences of Escherichia coli K-12 strains MG1655 and W3110.</title>
        <authorList>
            <person name="Hayashi K."/>
            <person name="Morooka N."/>
            <person name="Yamamoto Y."/>
            <person name="Fujita K."/>
            <person name="Isono K."/>
            <person name="Choi S."/>
            <person name="Ohtsubo E."/>
            <person name="Baba T."/>
            <person name="Wanner B.L."/>
            <person name="Mori H."/>
            <person name="Horiuchi T."/>
        </authorList>
    </citation>
    <scope>NUCLEOTIDE SEQUENCE [LARGE SCALE GENOMIC DNA]</scope>
    <source>
        <strain>K12 / W3110 / ATCC 27325 / DSM 5911</strain>
    </source>
</reference>
<name>YQFE_ECOLI</name>
<feature type="chain" id="PRO_0000169360" description="Putative protein YqfE">
    <location>
        <begin position="1"/>
        <end position="76"/>
    </location>
</feature>
<evidence type="ECO:0000305" key="1"/>
<organism>
    <name type="scientific">Escherichia coli (strain K12)</name>
    <dbReference type="NCBI Taxonomy" id="83333"/>
    <lineage>
        <taxon>Bacteria</taxon>
        <taxon>Pseudomonadati</taxon>
        <taxon>Pseudomonadota</taxon>
        <taxon>Gammaproteobacteria</taxon>
        <taxon>Enterobacterales</taxon>
        <taxon>Enterobacteriaceae</taxon>
        <taxon>Escherichia</taxon>
    </lineage>
</organism>
<accession>P64562</accession>
<accession>P52038</accession>
<accession>Q2M9S7</accession>
<protein>
    <recommendedName>
        <fullName>Putative protein YqfE</fullName>
    </recommendedName>
</protein>
<sequence length="76" mass="8372">MHFAQRVRALVVLNGVALLPQFACKQGLANGELVRLFAPWSGIPRPLYALFAGRKGMPAIARYFMDELTTRLANGV</sequence>
<proteinExistence type="uncertain"/>